<evidence type="ECO:0000255" key="1">
    <source>
        <dbReference type="HAMAP-Rule" id="MF_00691"/>
    </source>
</evidence>
<accession>B5EZF1</accession>
<feature type="chain" id="PRO_1000132068" description="5-oxoprolinase subunit A">
    <location>
        <begin position="1"/>
        <end position="244"/>
    </location>
</feature>
<gene>
    <name evidence="1" type="primary">pxpA</name>
    <name type="ordered locus">SeAg_B0761</name>
</gene>
<sequence>MNIDLNADLGEGCASDSELLTLVSSANIACGFHAGDAQTMLTCVREALKNGVAIGAHPSFPDRDNFGRTAMVLPPETVYAQTLYQIGALGAIVQAQGGVMRHVKPHGMLYNQAAKDPHLAQAIAKAVHDYDPSLILVGLAGSELIRAGERHRLVTRQEVFADRGYQADGSLVPRTQPGALIHDEEQALAQTLDMVQAGRVKSVTGVWTTVTAQTVCIHGDGEYALAFARRLRAAFNARNIHVIA</sequence>
<reference key="1">
    <citation type="journal article" date="2011" name="J. Bacteriol.">
        <title>Comparative genomics of 28 Salmonella enterica isolates: evidence for CRISPR-mediated adaptive sublineage evolution.</title>
        <authorList>
            <person name="Fricke W.F."/>
            <person name="Mammel M.K."/>
            <person name="McDermott P.F."/>
            <person name="Tartera C."/>
            <person name="White D.G."/>
            <person name="Leclerc J.E."/>
            <person name="Ravel J."/>
            <person name="Cebula T.A."/>
        </authorList>
    </citation>
    <scope>NUCLEOTIDE SEQUENCE [LARGE SCALE GENOMIC DNA]</scope>
    <source>
        <strain>SL483</strain>
    </source>
</reference>
<protein>
    <recommendedName>
        <fullName evidence="1">5-oxoprolinase subunit A</fullName>
        <shortName evidence="1">5-OPase subunit A</shortName>
        <ecNumber evidence="1">3.5.2.9</ecNumber>
    </recommendedName>
    <alternativeName>
        <fullName evidence="1">5-oxoprolinase (ATP-hydrolyzing) subunit A</fullName>
    </alternativeName>
</protein>
<comment type="function">
    <text evidence="1">Catalyzes the cleavage of 5-oxoproline to form L-glutamate coupled to the hydrolysis of ATP to ADP and inorganic phosphate.</text>
</comment>
<comment type="catalytic activity">
    <reaction evidence="1">
        <text>5-oxo-L-proline + ATP + 2 H2O = L-glutamate + ADP + phosphate + H(+)</text>
        <dbReference type="Rhea" id="RHEA:10348"/>
        <dbReference type="ChEBI" id="CHEBI:15377"/>
        <dbReference type="ChEBI" id="CHEBI:15378"/>
        <dbReference type="ChEBI" id="CHEBI:29985"/>
        <dbReference type="ChEBI" id="CHEBI:30616"/>
        <dbReference type="ChEBI" id="CHEBI:43474"/>
        <dbReference type="ChEBI" id="CHEBI:58402"/>
        <dbReference type="ChEBI" id="CHEBI:456216"/>
        <dbReference type="EC" id="3.5.2.9"/>
    </reaction>
</comment>
<comment type="subunit">
    <text evidence="1">Forms a complex composed of PxpA, PxpB and PxpC.</text>
</comment>
<comment type="similarity">
    <text evidence="1">Belongs to the LamB/PxpA family.</text>
</comment>
<name>PXPA_SALA4</name>
<proteinExistence type="inferred from homology"/>
<keyword id="KW-0067">ATP-binding</keyword>
<keyword id="KW-0378">Hydrolase</keyword>
<keyword id="KW-0547">Nucleotide-binding</keyword>
<dbReference type="EC" id="3.5.2.9" evidence="1"/>
<dbReference type="EMBL" id="CP001138">
    <property type="protein sequence ID" value="ACH50966.1"/>
    <property type="molecule type" value="Genomic_DNA"/>
</dbReference>
<dbReference type="RefSeq" id="WP_001017911.1">
    <property type="nucleotide sequence ID" value="NC_011149.1"/>
</dbReference>
<dbReference type="SMR" id="B5EZF1"/>
<dbReference type="KEGG" id="sea:SeAg_B0761"/>
<dbReference type="HOGENOM" id="CLU_069535_0_0_6"/>
<dbReference type="Proteomes" id="UP000008819">
    <property type="component" value="Chromosome"/>
</dbReference>
<dbReference type="GO" id="GO:0017168">
    <property type="term" value="F:5-oxoprolinase (ATP-hydrolyzing) activity"/>
    <property type="evidence" value="ECO:0007669"/>
    <property type="project" value="UniProtKB-UniRule"/>
</dbReference>
<dbReference type="GO" id="GO:0005524">
    <property type="term" value="F:ATP binding"/>
    <property type="evidence" value="ECO:0007669"/>
    <property type="project" value="UniProtKB-UniRule"/>
</dbReference>
<dbReference type="GO" id="GO:0005975">
    <property type="term" value="P:carbohydrate metabolic process"/>
    <property type="evidence" value="ECO:0007669"/>
    <property type="project" value="InterPro"/>
</dbReference>
<dbReference type="CDD" id="cd10800">
    <property type="entry name" value="LamB_YcsF_YbgL_like"/>
    <property type="match status" value="1"/>
</dbReference>
<dbReference type="Gene3D" id="3.20.20.370">
    <property type="entry name" value="Glycoside hydrolase/deacetylase"/>
    <property type="match status" value="1"/>
</dbReference>
<dbReference type="HAMAP" id="MF_00691">
    <property type="entry name" value="PxpA"/>
    <property type="match status" value="1"/>
</dbReference>
<dbReference type="InterPro" id="IPR011330">
    <property type="entry name" value="Glyco_hydro/deAcase_b/a-brl"/>
</dbReference>
<dbReference type="InterPro" id="IPR005501">
    <property type="entry name" value="LamB/YcsF/PxpA-like"/>
</dbReference>
<dbReference type="NCBIfam" id="NF003812">
    <property type="entry name" value="PRK05406.1-1"/>
    <property type="match status" value="1"/>
</dbReference>
<dbReference type="NCBIfam" id="NF003814">
    <property type="entry name" value="PRK05406.1-3"/>
    <property type="match status" value="1"/>
</dbReference>
<dbReference type="NCBIfam" id="NF003815">
    <property type="entry name" value="PRK05406.1-4"/>
    <property type="match status" value="1"/>
</dbReference>
<dbReference type="NCBIfam" id="NF003816">
    <property type="entry name" value="PRK05406.1-5"/>
    <property type="match status" value="1"/>
</dbReference>
<dbReference type="PANTHER" id="PTHR30292:SF0">
    <property type="entry name" value="5-OXOPROLINASE SUBUNIT A"/>
    <property type="match status" value="1"/>
</dbReference>
<dbReference type="PANTHER" id="PTHR30292">
    <property type="entry name" value="UNCHARACTERIZED PROTEIN YBGL-RELATED"/>
    <property type="match status" value="1"/>
</dbReference>
<dbReference type="Pfam" id="PF03746">
    <property type="entry name" value="LamB_YcsF"/>
    <property type="match status" value="1"/>
</dbReference>
<dbReference type="SUPFAM" id="SSF88713">
    <property type="entry name" value="Glycoside hydrolase/deacetylase"/>
    <property type="match status" value="1"/>
</dbReference>
<organism>
    <name type="scientific">Salmonella agona (strain SL483)</name>
    <dbReference type="NCBI Taxonomy" id="454166"/>
    <lineage>
        <taxon>Bacteria</taxon>
        <taxon>Pseudomonadati</taxon>
        <taxon>Pseudomonadota</taxon>
        <taxon>Gammaproteobacteria</taxon>
        <taxon>Enterobacterales</taxon>
        <taxon>Enterobacteriaceae</taxon>
        <taxon>Salmonella</taxon>
    </lineage>
</organism>